<evidence type="ECO:0000255" key="1">
    <source>
        <dbReference type="HAMAP-Rule" id="MF_01321"/>
    </source>
</evidence>
<organism>
    <name type="scientific">Borrelia hermsii (strain HS1 / DAH)</name>
    <dbReference type="NCBI Taxonomy" id="314723"/>
    <lineage>
        <taxon>Bacteria</taxon>
        <taxon>Pseudomonadati</taxon>
        <taxon>Spirochaetota</taxon>
        <taxon>Spirochaetia</taxon>
        <taxon>Spirochaetales</taxon>
        <taxon>Borreliaceae</taxon>
        <taxon>Borrelia</taxon>
    </lineage>
</organism>
<protein>
    <recommendedName>
        <fullName evidence="1">DNA-directed RNA polymerase subunit beta</fullName>
        <shortName evidence="1">RNAP subunit beta</shortName>
        <ecNumber evidence="1">2.7.7.6</ecNumber>
    </recommendedName>
    <alternativeName>
        <fullName evidence="1">RNA polymerase subunit beta</fullName>
    </alternativeName>
    <alternativeName>
        <fullName evidence="1">Transcriptase subunit beta</fullName>
    </alternativeName>
</protein>
<accession>B2S092</accession>
<proteinExistence type="inferred from homology"/>
<reference key="1">
    <citation type="submission" date="2004-12" db="EMBL/GenBank/DDBJ databases">
        <title>The genome sequence of Borrelia hermsii and Borrelia turicatae: comparative analysis of two agents of endemic N. America relapsing fever.</title>
        <authorList>
            <person name="Porcella S.F."/>
            <person name="Raffel S.J."/>
            <person name="Schrumpf M.E."/>
            <person name="Montgomery B."/>
            <person name="Smith T."/>
            <person name="Schwan T.G."/>
        </authorList>
    </citation>
    <scope>NUCLEOTIDE SEQUENCE [LARGE SCALE GENOMIC DNA]</scope>
    <source>
        <strain>HS1 / DAH</strain>
    </source>
</reference>
<feature type="chain" id="PRO_1000141664" description="DNA-directed RNA polymerase subunit beta">
    <location>
        <begin position="1"/>
        <end position="1155"/>
    </location>
</feature>
<sequence>MIKRVHLGQGKAEEILDLPNLIEIQLNSYEKFLQLERLKTNRPLLNEGLESVFRDVFPMKSSNGEVALEYEKYYIEYNSLSFTEKECKRKGQSYEAVLKIRLNLQFLTTGEIRQKDVYMGTIPLMTDRGTFIVNGAERVIVSQIHRSPGVVFYKEKDLYYARIIPYRGSWLEFEIDSKKDYLYVKIDRKKRILVTLFLRALGLNTRERIIETFYKIRKIEVNEDTKREITGQYLATNIIIKENMTYRAGDKITLQDIEDFLQNGVKEIDLIDFDGYDSVPGKHFISSDVILNCFEKEDAYFSLKDGFKELSRESVMLAVYSVLLPGEPISIDNAESDLRNVFFSEKRYDLGHVGRYKLSKKFGLDDLTTSVLTMTDIVNTISHLLRIYDGHDVLDDIDHLGNRRVRSVGELLTNIYKGAMSRVEKIAKDRMSNKEVFNLKPQELISVKPIVSAVKEFFATSQLSQFMDQVNPLAELTHKRRLNALGPGGLSRDRAGFEVRDVHYTHYGRMCPIETPEGPNIGLIVSLATYAKVNDYGFLETPYRKVVDGKVTDEIEYLSAIDEEKKCIAQANAAVNAEGNYIDDLISVRVSGDYTTMIPKNIDYMDVSPRQLISVSSALIPFLEHNDANRALMGSNMQRQAVPLLFPQPPIVGTGMERIVAKDSGVVVKAKRSGIVVLATSKKIVIRPEDAADDHDLDEYELAKYERTNQDTSFNHSVLVKEGQVVNKGEIIADGPATRYGEVALGNNLLVGFIPWNGFNYEDAILISERIIKEDLYTSIHIKEFSIEVRETKLGPEKVTADIPNVSGKILNKLDENGIVRIGTYVKPGDILIGKVTPKSEGDITPEFKLLTSIFGEKAKDVKNNSLKVPHGTEGTVIDVQRITKDDVSNLPPGVDEILKVYIAKKRKLKEGDKMAGRHGNKGVVAKILPVEDMPYLADGTPLDICLNPLGVPSRMNIGQLMESQLGLAGKYLGEYYDVPVFESATNECIQEKLKKAGFNETSKAVLYDGYTGEPFENEVMVGIIYMLKLHHLVDDKMHARSTGPYSLVSQQPLGGKAQFGGQRLGEMEVWALEAYGAAHTLQELLTVKSDDMSGRVKIYENIVKGIPTNVSGIPESFNVLMQELRGLGFDLSIYDDKGNQIPLTEKEEELINKT</sequence>
<name>RPOB_BORHD</name>
<gene>
    <name evidence="1" type="primary">rpoB</name>
    <name type="ordered locus">BH0389</name>
</gene>
<keyword id="KW-0240">DNA-directed RNA polymerase</keyword>
<keyword id="KW-0548">Nucleotidyltransferase</keyword>
<keyword id="KW-0804">Transcription</keyword>
<keyword id="KW-0808">Transferase</keyword>
<dbReference type="EC" id="2.7.7.6" evidence="1"/>
<dbReference type="EMBL" id="CP000048">
    <property type="protein sequence ID" value="AAX16898.1"/>
    <property type="molecule type" value="Genomic_DNA"/>
</dbReference>
<dbReference type="RefSeq" id="WP_012422155.1">
    <property type="nucleotide sequence ID" value="NZ_CP073136.1"/>
</dbReference>
<dbReference type="SMR" id="B2S092"/>
<dbReference type="GeneID" id="71843195"/>
<dbReference type="KEGG" id="bhr:BH0389"/>
<dbReference type="HOGENOM" id="CLU_000524_4_1_12"/>
<dbReference type="Proteomes" id="UP000008834">
    <property type="component" value="Chromosome"/>
</dbReference>
<dbReference type="GO" id="GO:0000428">
    <property type="term" value="C:DNA-directed RNA polymerase complex"/>
    <property type="evidence" value="ECO:0007669"/>
    <property type="project" value="UniProtKB-KW"/>
</dbReference>
<dbReference type="GO" id="GO:0003677">
    <property type="term" value="F:DNA binding"/>
    <property type="evidence" value="ECO:0007669"/>
    <property type="project" value="UniProtKB-UniRule"/>
</dbReference>
<dbReference type="GO" id="GO:0003899">
    <property type="term" value="F:DNA-directed RNA polymerase activity"/>
    <property type="evidence" value="ECO:0007669"/>
    <property type="project" value="UniProtKB-UniRule"/>
</dbReference>
<dbReference type="GO" id="GO:0032549">
    <property type="term" value="F:ribonucleoside binding"/>
    <property type="evidence" value="ECO:0007669"/>
    <property type="project" value="InterPro"/>
</dbReference>
<dbReference type="GO" id="GO:0006351">
    <property type="term" value="P:DNA-templated transcription"/>
    <property type="evidence" value="ECO:0007669"/>
    <property type="project" value="UniProtKB-UniRule"/>
</dbReference>
<dbReference type="CDD" id="cd00653">
    <property type="entry name" value="RNA_pol_B_RPB2"/>
    <property type="match status" value="1"/>
</dbReference>
<dbReference type="Gene3D" id="2.40.50.100">
    <property type="match status" value="1"/>
</dbReference>
<dbReference type="Gene3D" id="2.40.50.150">
    <property type="match status" value="1"/>
</dbReference>
<dbReference type="Gene3D" id="3.90.1100.10">
    <property type="match status" value="2"/>
</dbReference>
<dbReference type="Gene3D" id="2.30.150.10">
    <property type="entry name" value="DNA-directed RNA polymerase, beta subunit, external 1 domain"/>
    <property type="match status" value="1"/>
</dbReference>
<dbReference type="Gene3D" id="2.40.270.10">
    <property type="entry name" value="DNA-directed RNA polymerase, subunit 2, domain 6"/>
    <property type="match status" value="2"/>
</dbReference>
<dbReference type="Gene3D" id="3.90.1800.10">
    <property type="entry name" value="RNA polymerase alpha subunit dimerisation domain"/>
    <property type="match status" value="1"/>
</dbReference>
<dbReference type="Gene3D" id="3.90.1110.10">
    <property type="entry name" value="RNA polymerase Rpb2, domain 2"/>
    <property type="match status" value="2"/>
</dbReference>
<dbReference type="HAMAP" id="MF_01321">
    <property type="entry name" value="RNApol_bact_RpoB"/>
    <property type="match status" value="1"/>
</dbReference>
<dbReference type="InterPro" id="IPR042107">
    <property type="entry name" value="DNA-dir_RNA_pol_bsu_ext_1_sf"/>
</dbReference>
<dbReference type="InterPro" id="IPR019462">
    <property type="entry name" value="DNA-dir_RNA_pol_bsu_external_1"/>
</dbReference>
<dbReference type="InterPro" id="IPR015712">
    <property type="entry name" value="DNA-dir_RNA_pol_su2"/>
</dbReference>
<dbReference type="InterPro" id="IPR007120">
    <property type="entry name" value="DNA-dir_RNAP_su2_dom"/>
</dbReference>
<dbReference type="InterPro" id="IPR037033">
    <property type="entry name" value="DNA-dir_RNAP_su2_hyb_sf"/>
</dbReference>
<dbReference type="InterPro" id="IPR010243">
    <property type="entry name" value="RNA_pol_bsu_bac"/>
</dbReference>
<dbReference type="InterPro" id="IPR007121">
    <property type="entry name" value="RNA_pol_bsu_CS"/>
</dbReference>
<dbReference type="InterPro" id="IPR007644">
    <property type="entry name" value="RNA_pol_bsu_protrusion"/>
</dbReference>
<dbReference type="InterPro" id="IPR007642">
    <property type="entry name" value="RNA_pol_Rpb2_2"/>
</dbReference>
<dbReference type="InterPro" id="IPR037034">
    <property type="entry name" value="RNA_pol_Rpb2_2_sf"/>
</dbReference>
<dbReference type="InterPro" id="IPR007645">
    <property type="entry name" value="RNA_pol_Rpb2_3"/>
</dbReference>
<dbReference type="InterPro" id="IPR007641">
    <property type="entry name" value="RNA_pol_Rpb2_7"/>
</dbReference>
<dbReference type="InterPro" id="IPR014724">
    <property type="entry name" value="RNA_pol_RPB2_OB-fold"/>
</dbReference>
<dbReference type="NCBIfam" id="NF001616">
    <property type="entry name" value="PRK00405.1"/>
    <property type="match status" value="1"/>
</dbReference>
<dbReference type="NCBIfam" id="TIGR02013">
    <property type="entry name" value="rpoB"/>
    <property type="match status" value="1"/>
</dbReference>
<dbReference type="PANTHER" id="PTHR20856">
    <property type="entry name" value="DNA-DIRECTED RNA POLYMERASE I SUBUNIT 2"/>
    <property type="match status" value="1"/>
</dbReference>
<dbReference type="Pfam" id="PF04563">
    <property type="entry name" value="RNA_pol_Rpb2_1"/>
    <property type="match status" value="1"/>
</dbReference>
<dbReference type="Pfam" id="PF04561">
    <property type="entry name" value="RNA_pol_Rpb2_2"/>
    <property type="match status" value="2"/>
</dbReference>
<dbReference type="Pfam" id="PF04565">
    <property type="entry name" value="RNA_pol_Rpb2_3"/>
    <property type="match status" value="1"/>
</dbReference>
<dbReference type="Pfam" id="PF10385">
    <property type="entry name" value="RNA_pol_Rpb2_45"/>
    <property type="match status" value="1"/>
</dbReference>
<dbReference type="Pfam" id="PF00562">
    <property type="entry name" value="RNA_pol_Rpb2_6"/>
    <property type="match status" value="1"/>
</dbReference>
<dbReference type="Pfam" id="PF04560">
    <property type="entry name" value="RNA_pol_Rpb2_7"/>
    <property type="match status" value="1"/>
</dbReference>
<dbReference type="SUPFAM" id="SSF64484">
    <property type="entry name" value="beta and beta-prime subunits of DNA dependent RNA-polymerase"/>
    <property type="match status" value="1"/>
</dbReference>
<dbReference type="PROSITE" id="PS01166">
    <property type="entry name" value="RNA_POL_BETA"/>
    <property type="match status" value="1"/>
</dbReference>
<comment type="function">
    <text evidence="1">DNA-dependent RNA polymerase catalyzes the transcription of DNA into RNA using the four ribonucleoside triphosphates as substrates.</text>
</comment>
<comment type="catalytic activity">
    <reaction evidence="1">
        <text>RNA(n) + a ribonucleoside 5'-triphosphate = RNA(n+1) + diphosphate</text>
        <dbReference type="Rhea" id="RHEA:21248"/>
        <dbReference type="Rhea" id="RHEA-COMP:14527"/>
        <dbReference type="Rhea" id="RHEA-COMP:17342"/>
        <dbReference type="ChEBI" id="CHEBI:33019"/>
        <dbReference type="ChEBI" id="CHEBI:61557"/>
        <dbReference type="ChEBI" id="CHEBI:140395"/>
        <dbReference type="EC" id="2.7.7.6"/>
    </reaction>
</comment>
<comment type="subunit">
    <text evidence="1">The RNAP catalytic core consists of 2 alpha, 1 beta, 1 beta' and 1 omega subunit. When a sigma factor is associated with the core the holoenzyme is formed, which can initiate transcription.</text>
</comment>
<comment type="similarity">
    <text evidence="1">Belongs to the RNA polymerase beta chain family.</text>
</comment>